<accession>Q5EB92</accession>
<evidence type="ECO:0000250" key="1">
    <source>
        <dbReference type="UniProtKB" id="Q9NW82"/>
    </source>
</evidence>
<evidence type="ECO:0000256" key="2">
    <source>
        <dbReference type="SAM" id="MobiDB-lite"/>
    </source>
</evidence>
<evidence type="ECO:0000305" key="3"/>
<evidence type="ECO:0007744" key="4">
    <source>
    </source>
</evidence>
<reference key="1">
    <citation type="journal article" date="2004" name="Genome Res.">
        <title>The status, quality, and expansion of the NIH full-length cDNA project: the Mammalian Gene Collection (MGC).</title>
        <authorList>
            <consortium name="The MGC Project Team"/>
        </authorList>
    </citation>
    <scope>NUCLEOTIDE SEQUENCE [LARGE SCALE MRNA]</scope>
    <source>
        <tissue>Thymus</tissue>
    </source>
</reference>
<reference key="2">
    <citation type="journal article" date="2012" name="Nat. Commun.">
        <title>Quantitative maps of protein phosphorylation sites across 14 different rat organs and tissues.</title>
        <authorList>
            <person name="Lundby A."/>
            <person name="Secher A."/>
            <person name="Lage K."/>
            <person name="Nordsborg N.B."/>
            <person name="Dmytriyev A."/>
            <person name="Lundby C."/>
            <person name="Olsen J.V."/>
        </authorList>
    </citation>
    <scope>PHOSPHORYLATION [LARGE SCALE ANALYSIS] AT SER-639</scope>
    <scope>IDENTIFICATION BY MASS SPECTROMETRY [LARGE SCALE ANALYSIS]</scope>
</reference>
<dbReference type="EMBL" id="BC089903">
    <property type="protein sequence ID" value="AAH89903.1"/>
    <property type="molecule type" value="mRNA"/>
</dbReference>
<dbReference type="RefSeq" id="NP_001013931.1">
    <property type="nucleotide sequence ID" value="NM_001013909.1"/>
</dbReference>
<dbReference type="SMR" id="Q5EB92"/>
<dbReference type="FunCoup" id="Q5EB92">
    <property type="interactions" value="4484"/>
</dbReference>
<dbReference type="IntAct" id="Q5EB92">
    <property type="interactions" value="1"/>
</dbReference>
<dbReference type="STRING" id="10116.ENSRNOP00000056890"/>
<dbReference type="GlyGen" id="Q5EB92">
    <property type="glycosylation" value="1 site"/>
</dbReference>
<dbReference type="iPTMnet" id="Q5EB92"/>
<dbReference type="PhosphoSitePlus" id="Q5EB92"/>
<dbReference type="jPOST" id="Q5EB92"/>
<dbReference type="PaxDb" id="10116-ENSRNOP00000056890"/>
<dbReference type="Ensembl" id="ENSRNOT00000060146.5">
    <property type="protein sequence ID" value="ENSRNOP00000056890.2"/>
    <property type="gene ID" value="ENSRNOG00000013336.8"/>
</dbReference>
<dbReference type="GeneID" id="294783"/>
<dbReference type="KEGG" id="rno:294783"/>
<dbReference type="AGR" id="RGD:1309487"/>
<dbReference type="CTD" id="55100"/>
<dbReference type="RGD" id="1309487">
    <property type="gene designation" value="Wdr70"/>
</dbReference>
<dbReference type="eggNOG" id="KOG0772">
    <property type="taxonomic scope" value="Eukaryota"/>
</dbReference>
<dbReference type="GeneTree" id="ENSGT00390000015433"/>
<dbReference type="HOGENOM" id="CLU_014033_1_2_1"/>
<dbReference type="InParanoid" id="Q5EB92"/>
<dbReference type="OMA" id="KGDQYIT"/>
<dbReference type="OrthoDB" id="10264376at2759"/>
<dbReference type="PhylomeDB" id="Q5EB92"/>
<dbReference type="TreeFam" id="TF105809"/>
<dbReference type="Reactome" id="R-RNO-72163">
    <property type="pathway name" value="mRNA Splicing - Major Pathway"/>
</dbReference>
<dbReference type="PRO" id="PR:Q5EB92"/>
<dbReference type="Proteomes" id="UP000002494">
    <property type="component" value="Chromosome 2"/>
</dbReference>
<dbReference type="Bgee" id="ENSRNOG00000013336">
    <property type="expression patterns" value="Expressed in testis and 20 other cell types or tissues"/>
</dbReference>
<dbReference type="GO" id="GO:0005634">
    <property type="term" value="C:nucleus"/>
    <property type="evidence" value="ECO:0000318"/>
    <property type="project" value="GO_Central"/>
</dbReference>
<dbReference type="GO" id="GO:0035861">
    <property type="term" value="C:site of double-strand break"/>
    <property type="evidence" value="ECO:0000318"/>
    <property type="project" value="GO_Central"/>
</dbReference>
<dbReference type="GO" id="GO:0019899">
    <property type="term" value="F:enzyme binding"/>
    <property type="evidence" value="ECO:0000266"/>
    <property type="project" value="RGD"/>
</dbReference>
<dbReference type="FunFam" id="2.130.10.10:FF:000501">
    <property type="entry name" value="WD repeat domain 70"/>
    <property type="match status" value="1"/>
</dbReference>
<dbReference type="FunFam" id="2.130.10.10:FF:000294">
    <property type="entry name" value="WD repeat-containing protein 70"/>
    <property type="match status" value="1"/>
</dbReference>
<dbReference type="Gene3D" id="2.130.10.10">
    <property type="entry name" value="YVTN repeat-like/Quinoprotein amine dehydrogenase"/>
    <property type="match status" value="2"/>
</dbReference>
<dbReference type="InterPro" id="IPR020472">
    <property type="entry name" value="G-protein_beta_WD-40_rep"/>
</dbReference>
<dbReference type="InterPro" id="IPR015943">
    <property type="entry name" value="WD40/YVTN_repeat-like_dom_sf"/>
</dbReference>
<dbReference type="InterPro" id="IPR036322">
    <property type="entry name" value="WD40_repeat_dom_sf"/>
</dbReference>
<dbReference type="InterPro" id="IPR001680">
    <property type="entry name" value="WD40_rpt"/>
</dbReference>
<dbReference type="InterPro" id="IPR051858">
    <property type="entry name" value="WD_repeat_GAD-1"/>
</dbReference>
<dbReference type="PANTHER" id="PTHR16017">
    <property type="entry name" value="GASTRULATION DEFECTIVE PROTEIN 1-RELATED"/>
    <property type="match status" value="1"/>
</dbReference>
<dbReference type="PANTHER" id="PTHR16017:SF0">
    <property type="entry name" value="WD REPEAT-CONTAINING PROTEIN 70"/>
    <property type="match status" value="1"/>
</dbReference>
<dbReference type="Pfam" id="PF00400">
    <property type="entry name" value="WD40"/>
    <property type="match status" value="3"/>
</dbReference>
<dbReference type="PRINTS" id="PR00320">
    <property type="entry name" value="GPROTEINBRPT"/>
</dbReference>
<dbReference type="SMART" id="SM00320">
    <property type="entry name" value="WD40"/>
    <property type="match status" value="6"/>
</dbReference>
<dbReference type="SUPFAM" id="SSF50978">
    <property type="entry name" value="WD40 repeat-like"/>
    <property type="match status" value="1"/>
</dbReference>
<dbReference type="PROSITE" id="PS00678">
    <property type="entry name" value="WD_REPEATS_1"/>
    <property type="match status" value="1"/>
</dbReference>
<dbReference type="PROSITE" id="PS50082">
    <property type="entry name" value="WD_REPEATS_2"/>
    <property type="match status" value="3"/>
</dbReference>
<dbReference type="PROSITE" id="PS50294">
    <property type="entry name" value="WD_REPEATS_REGION"/>
    <property type="match status" value="1"/>
</dbReference>
<comment type="similarity">
    <text evidence="3">Belongs to the WD repeat GAD-1 family.</text>
</comment>
<protein>
    <recommendedName>
        <fullName>WD repeat-containing protein 70</fullName>
    </recommendedName>
</protein>
<organism>
    <name type="scientific">Rattus norvegicus</name>
    <name type="common">Rat</name>
    <dbReference type="NCBI Taxonomy" id="10116"/>
    <lineage>
        <taxon>Eukaryota</taxon>
        <taxon>Metazoa</taxon>
        <taxon>Chordata</taxon>
        <taxon>Craniata</taxon>
        <taxon>Vertebrata</taxon>
        <taxon>Euteleostomi</taxon>
        <taxon>Mammalia</taxon>
        <taxon>Eutheria</taxon>
        <taxon>Euarchontoglires</taxon>
        <taxon>Glires</taxon>
        <taxon>Rodentia</taxon>
        <taxon>Myomorpha</taxon>
        <taxon>Muroidea</taxon>
        <taxon>Muridae</taxon>
        <taxon>Murinae</taxon>
        <taxon>Rattus</taxon>
    </lineage>
</organism>
<sequence>MEHSGPSEVTGADTAGPDPQLAVTMGFTGFGKKARTFDLEAMFEQTRRTAVERSRKTLEAREKEEEMNREKELRKQLEDIEPTPSSSSAVRERSKSSSRDTSSSDSDHSSGSSDDELIGPPLPPEMVGGPVNTVDEDILGPLPPPLCEEGEDDDDDDLEDEGEEDNPIHRIPDSHEITLKHGTKTVSALGLDPSGARLVTGGYDYDVKFWDFAGMDASFKAFRSLQPCECHQIKSLQYSNTGDMILVVSGSSQAKVIDRDGFEVMECIKGDQYIVDMANTKGHTAMLHTGSWHPKIKGEFMTCSNDATVRLWEVENPKKQKSVFKPRTMQGKKVIPTTCTYSRDGNLVAAACQNGSIQIWDRNLTVHPKFHYKQAHAPGTDTSCVAFSYDGNVLASRGGDDTLKLWDVRQFNKPLFSASDLPTLFPMTDCCFSPDDKLIVTGTSVQRGCGSGKLVFFERRTFQRVYEIHITDASVVRCLWHPKLNQIMVGTGNGLAKVYYDPNKSQRGAKLCVVKTQRKAKQAETLTQDYIITPHALPMFREPRQRSTRKQLEKDRLDPLKSHKPEPPVAGPGRGGRVGTHGGTLSSYIVKNIALDKTDDSNPREAILRHAKAAEDNPYWVSPAYSKTQPKTMFAQVESDDEESKNEPEWKKRKI</sequence>
<proteinExistence type="evidence at protein level"/>
<feature type="chain" id="PRO_0000305146" description="WD repeat-containing protein 70">
    <location>
        <begin position="1"/>
        <end position="655"/>
    </location>
</feature>
<feature type="repeat" description="WD 1">
    <location>
        <begin position="181"/>
        <end position="220"/>
    </location>
</feature>
<feature type="repeat" description="WD 2">
    <location>
        <begin position="228"/>
        <end position="269"/>
    </location>
</feature>
<feature type="repeat" description="WD 3">
    <location>
        <begin position="282"/>
        <end position="322"/>
    </location>
</feature>
<feature type="repeat" description="WD 4">
    <location>
        <begin position="331"/>
        <end position="370"/>
    </location>
</feature>
<feature type="repeat" description="WD 5">
    <location>
        <begin position="377"/>
        <end position="416"/>
    </location>
</feature>
<feature type="repeat" description="WD 6">
    <location>
        <begin position="422"/>
        <end position="467"/>
    </location>
</feature>
<feature type="repeat" description="WD 7">
    <location>
        <begin position="470"/>
        <end position="509"/>
    </location>
</feature>
<feature type="region of interest" description="Disordered" evidence="2">
    <location>
        <begin position="1"/>
        <end position="24"/>
    </location>
</feature>
<feature type="region of interest" description="Disordered" evidence="2">
    <location>
        <begin position="43"/>
        <end position="170"/>
    </location>
</feature>
<feature type="region of interest" description="Disordered" evidence="2">
    <location>
        <begin position="541"/>
        <end position="582"/>
    </location>
</feature>
<feature type="region of interest" description="Disordered" evidence="2">
    <location>
        <begin position="632"/>
        <end position="655"/>
    </location>
</feature>
<feature type="compositionally biased region" description="Basic and acidic residues" evidence="2">
    <location>
        <begin position="45"/>
        <end position="78"/>
    </location>
</feature>
<feature type="compositionally biased region" description="Low complexity" evidence="2">
    <location>
        <begin position="99"/>
        <end position="112"/>
    </location>
</feature>
<feature type="compositionally biased region" description="Acidic residues" evidence="2">
    <location>
        <begin position="148"/>
        <end position="165"/>
    </location>
</feature>
<feature type="compositionally biased region" description="Basic and acidic residues" evidence="2">
    <location>
        <begin position="541"/>
        <end position="566"/>
    </location>
</feature>
<feature type="compositionally biased region" description="Gly residues" evidence="2">
    <location>
        <begin position="572"/>
        <end position="582"/>
    </location>
</feature>
<feature type="compositionally biased region" description="Basic and acidic residues" evidence="2">
    <location>
        <begin position="645"/>
        <end position="655"/>
    </location>
</feature>
<feature type="modified residue" description="N6-acetyllysine" evidence="1">
    <location>
        <position position="453"/>
    </location>
</feature>
<feature type="modified residue" description="Phosphothreonine" evidence="1">
    <location>
        <position position="580"/>
    </location>
</feature>
<feature type="modified residue" description="Phosphoserine" evidence="1">
    <location>
        <position position="622"/>
    </location>
</feature>
<feature type="modified residue" description="Phosphoserine" evidence="4">
    <location>
        <position position="639"/>
    </location>
</feature>
<feature type="cross-link" description="Glycyl lysine isopeptide (Lys-Gly) (interchain with G-Cter in SUMO2)" evidence="1">
    <location>
        <position position="297"/>
    </location>
</feature>
<feature type="cross-link" description="Glycyl lysine isopeptide (Lys-Gly) (interchain with G-Cter in SUMO2)" evidence="1">
    <location>
        <position position="591"/>
    </location>
</feature>
<feature type="cross-link" description="Glycyl lysine isopeptide (Lys-Gly) (interchain with G-Cter in SUMO2)" evidence="1">
    <location>
        <position position="597"/>
    </location>
</feature>
<gene>
    <name type="primary">Wdr70</name>
</gene>
<name>WDR70_RAT</name>
<keyword id="KW-0007">Acetylation</keyword>
<keyword id="KW-1017">Isopeptide bond</keyword>
<keyword id="KW-0597">Phosphoprotein</keyword>
<keyword id="KW-1185">Reference proteome</keyword>
<keyword id="KW-0677">Repeat</keyword>
<keyword id="KW-0832">Ubl conjugation</keyword>
<keyword id="KW-0853">WD repeat</keyword>